<accession>Q0IHT1</accession>
<evidence type="ECO:0000250" key="1"/>
<evidence type="ECO:0000305" key="2"/>
<gene>
    <name type="primary">camk2n2</name>
</gene>
<name>CK2N2_XENTR</name>
<organism>
    <name type="scientific">Xenopus tropicalis</name>
    <name type="common">Western clawed frog</name>
    <name type="synonym">Silurana tropicalis</name>
    <dbReference type="NCBI Taxonomy" id="8364"/>
    <lineage>
        <taxon>Eukaryota</taxon>
        <taxon>Metazoa</taxon>
        <taxon>Chordata</taxon>
        <taxon>Craniata</taxon>
        <taxon>Vertebrata</taxon>
        <taxon>Euteleostomi</taxon>
        <taxon>Amphibia</taxon>
        <taxon>Batrachia</taxon>
        <taxon>Anura</taxon>
        <taxon>Pipoidea</taxon>
        <taxon>Pipidae</taxon>
        <taxon>Xenopodinae</taxon>
        <taxon>Xenopus</taxon>
        <taxon>Silurana</taxon>
    </lineage>
</organism>
<feature type="chain" id="PRO_0000327270" description="Calcium/calmodulin-dependent protein kinase II inhibitor 2">
    <location>
        <begin position="1"/>
        <end position="79"/>
    </location>
</feature>
<feature type="region of interest" description="Inhibitory domain" evidence="1">
    <location>
        <begin position="43"/>
        <end position="69"/>
    </location>
</feature>
<protein>
    <recommendedName>
        <fullName>Calcium/calmodulin-dependent protein kinase II inhibitor 2</fullName>
    </recommendedName>
</protein>
<sequence>MSEILPYSDEKMGHYGSDGDVGQISFSCRLQDTSSFFGGNQQKRPPKLGQIGRAKRVVIEDDRIDEVLKGVSDKSPSGV</sequence>
<dbReference type="EMBL" id="BC122983">
    <property type="protein sequence ID" value="AAI22984.1"/>
    <property type="molecule type" value="mRNA"/>
</dbReference>
<dbReference type="RefSeq" id="NP_001165075.1">
    <property type="nucleotide sequence ID" value="NM_001171604.1"/>
</dbReference>
<dbReference type="FunCoup" id="Q0IHT1">
    <property type="interactions" value="131"/>
</dbReference>
<dbReference type="PaxDb" id="8364-ENSXETP00000037625"/>
<dbReference type="DNASU" id="780061"/>
<dbReference type="GeneID" id="780061"/>
<dbReference type="KEGG" id="xtr:780061"/>
<dbReference type="AGR" id="Xenbase:XB-GENE-960926"/>
<dbReference type="CTD" id="94032"/>
<dbReference type="eggNOG" id="ENOG502S4FG">
    <property type="taxonomic scope" value="Eukaryota"/>
</dbReference>
<dbReference type="HOGENOM" id="CLU_197183_0_0_1"/>
<dbReference type="InParanoid" id="Q0IHT1"/>
<dbReference type="OMA" id="MSEIMPY"/>
<dbReference type="OrthoDB" id="9922824at2759"/>
<dbReference type="PhylomeDB" id="Q0IHT1"/>
<dbReference type="TreeFam" id="TF333175"/>
<dbReference type="Proteomes" id="UP000008143">
    <property type="component" value="Chromosome 5"/>
</dbReference>
<dbReference type="Bgee" id="ENSXETG00000038611">
    <property type="expression patterns" value="Expressed in brain and 3 other cell types or tissues"/>
</dbReference>
<dbReference type="GO" id="GO:0005829">
    <property type="term" value="C:cytosol"/>
    <property type="evidence" value="ECO:0007669"/>
    <property type="project" value="UniProtKB-SubCell"/>
</dbReference>
<dbReference type="GO" id="GO:0005634">
    <property type="term" value="C:nucleus"/>
    <property type="evidence" value="ECO:0007669"/>
    <property type="project" value="UniProtKB-SubCell"/>
</dbReference>
<dbReference type="GO" id="GO:0004860">
    <property type="term" value="F:protein kinase inhibitor activity"/>
    <property type="evidence" value="ECO:0007669"/>
    <property type="project" value="UniProtKB-KW"/>
</dbReference>
<dbReference type="InterPro" id="IPR026779">
    <property type="entry name" value="Camk2n"/>
</dbReference>
<dbReference type="PANTHER" id="PTHR31007">
    <property type="entry name" value="CALCIUM/CALMODULIN-DEPENDENT PROTEIN KINASE II INHIBITOR 2"/>
    <property type="match status" value="1"/>
</dbReference>
<dbReference type="PANTHER" id="PTHR31007:SF1">
    <property type="entry name" value="CALCIUM_CALMODULIN-DEPENDENT PROTEIN KINASE II INHIBITOR 2"/>
    <property type="match status" value="1"/>
</dbReference>
<dbReference type="Pfam" id="PF15170">
    <property type="entry name" value="CaM-KIIN"/>
    <property type="match status" value="1"/>
</dbReference>
<keyword id="KW-0963">Cytoplasm</keyword>
<keyword id="KW-0539">Nucleus</keyword>
<keyword id="KW-0649">Protein kinase inhibitor</keyword>
<keyword id="KW-1185">Reference proteome</keyword>
<comment type="function">
    <text evidence="1">Potent and specific cellular inhibitor of CaM-kinase II (CAMK2). Traps Ca(2+)/calmodulin on CAMK2 (By similarity).</text>
</comment>
<comment type="subcellular location">
    <subcellularLocation>
        <location evidence="1">Nucleus</location>
    </subcellularLocation>
    <subcellularLocation>
        <location evidence="1">Cytoplasm</location>
        <location evidence="1">Cytosol</location>
    </subcellularLocation>
</comment>
<comment type="similarity">
    <text evidence="2">Belongs to the CAMK2N family.</text>
</comment>
<reference key="1">
    <citation type="submission" date="2006-09" db="EMBL/GenBank/DDBJ databases">
        <authorList>
            <consortium name="NIH - Xenopus Gene Collection (XGC) project"/>
        </authorList>
    </citation>
    <scope>NUCLEOTIDE SEQUENCE [LARGE SCALE MRNA]</scope>
    <source>
        <tissue>Brain</tissue>
    </source>
</reference>
<proteinExistence type="inferred from homology"/>